<keyword id="KW-0067">ATP-binding</keyword>
<keyword id="KW-0418">Kinase</keyword>
<keyword id="KW-0460">Magnesium</keyword>
<keyword id="KW-0479">Metal-binding</keyword>
<keyword id="KW-0547">Nucleotide-binding</keyword>
<keyword id="KW-0784">Thiamine biosynthesis</keyword>
<keyword id="KW-0808">Transferase</keyword>
<sequence>MQNPTTTPGSLLTAMRANPPLVQCITNFVAMNIAANVMLAAGASPAMVHAEEEAGEFAAISGALTINIGTLSTGWLAGMTSAAQAANKAGKPWVLDPVAHYATSFRRRSVAQLLELQPTIIRGNASEIIALAGGTSRGQGVDSRDPVELAEEAAVQLAQKHRTIVAVTGATDFVTDGNKASRIEGGSPLMPQVTALGCSLTCLVGAFAATRPDHPLDATVAALAAFAVAGERAGRQVDGPGSFSWRFLDALAALDEKAIDSEARVISL</sequence>
<organism>
    <name type="scientific">Rhizobium rhizogenes (strain K84 / ATCC BAA-868)</name>
    <name type="common">Agrobacterium radiobacter</name>
    <dbReference type="NCBI Taxonomy" id="311403"/>
    <lineage>
        <taxon>Bacteria</taxon>
        <taxon>Pseudomonadati</taxon>
        <taxon>Pseudomonadota</taxon>
        <taxon>Alphaproteobacteria</taxon>
        <taxon>Hyphomicrobiales</taxon>
        <taxon>Rhizobiaceae</taxon>
        <taxon>Rhizobium/Agrobacterium group</taxon>
        <taxon>Rhizobium</taxon>
    </lineage>
</organism>
<gene>
    <name evidence="1" type="primary">thiM</name>
    <name type="ordered locus">Arad_9219</name>
</gene>
<reference key="1">
    <citation type="journal article" date="2009" name="J. Bacteriol.">
        <title>Genome sequences of three Agrobacterium biovars help elucidate the evolution of multichromosome genomes in bacteria.</title>
        <authorList>
            <person name="Slater S.C."/>
            <person name="Goldman B.S."/>
            <person name="Goodner B."/>
            <person name="Setubal J.C."/>
            <person name="Farrand S.K."/>
            <person name="Nester E.W."/>
            <person name="Burr T.J."/>
            <person name="Banta L."/>
            <person name="Dickerman A.W."/>
            <person name="Paulsen I."/>
            <person name="Otten L."/>
            <person name="Suen G."/>
            <person name="Welch R."/>
            <person name="Almeida N.F."/>
            <person name="Arnold F."/>
            <person name="Burton O.T."/>
            <person name="Du Z."/>
            <person name="Ewing A."/>
            <person name="Godsy E."/>
            <person name="Heisel S."/>
            <person name="Houmiel K.L."/>
            <person name="Jhaveri J."/>
            <person name="Lu J."/>
            <person name="Miller N.M."/>
            <person name="Norton S."/>
            <person name="Chen Q."/>
            <person name="Phoolcharoen W."/>
            <person name="Ohlin V."/>
            <person name="Ondrusek D."/>
            <person name="Pride N."/>
            <person name="Stricklin S.L."/>
            <person name="Sun J."/>
            <person name="Wheeler C."/>
            <person name="Wilson L."/>
            <person name="Zhu H."/>
            <person name="Wood D.W."/>
        </authorList>
    </citation>
    <scope>NUCLEOTIDE SEQUENCE [LARGE SCALE GENOMIC DNA]</scope>
    <source>
        <strain>K84 / ATCC BAA-868</strain>
    </source>
</reference>
<comment type="function">
    <text evidence="1">Catalyzes the phosphorylation of the hydroxyl group of 4-methyl-5-beta-hydroxyethylthiazole (THZ).</text>
</comment>
<comment type="catalytic activity">
    <reaction evidence="1">
        <text>5-(2-hydroxyethyl)-4-methylthiazole + ATP = 4-methyl-5-(2-phosphooxyethyl)-thiazole + ADP + H(+)</text>
        <dbReference type="Rhea" id="RHEA:24212"/>
        <dbReference type="ChEBI" id="CHEBI:15378"/>
        <dbReference type="ChEBI" id="CHEBI:17957"/>
        <dbReference type="ChEBI" id="CHEBI:30616"/>
        <dbReference type="ChEBI" id="CHEBI:58296"/>
        <dbReference type="ChEBI" id="CHEBI:456216"/>
        <dbReference type="EC" id="2.7.1.50"/>
    </reaction>
</comment>
<comment type="cofactor">
    <cofactor evidence="1">
        <name>Mg(2+)</name>
        <dbReference type="ChEBI" id="CHEBI:18420"/>
    </cofactor>
</comment>
<comment type="pathway">
    <text evidence="1">Cofactor biosynthesis; thiamine diphosphate biosynthesis; 4-methyl-5-(2-phosphoethyl)-thiazole from 5-(2-hydroxyethyl)-4-methylthiazole: step 1/1.</text>
</comment>
<comment type="similarity">
    <text evidence="1">Belongs to the Thz kinase family.</text>
</comment>
<evidence type="ECO:0000255" key="1">
    <source>
        <dbReference type="HAMAP-Rule" id="MF_00228"/>
    </source>
</evidence>
<feature type="chain" id="PRO_0000383817" description="Hydroxyethylthiazole kinase">
    <location>
        <begin position="1"/>
        <end position="268"/>
    </location>
</feature>
<feature type="binding site" evidence="1">
    <location>
        <position position="47"/>
    </location>
    <ligand>
        <name>substrate</name>
    </ligand>
</feature>
<feature type="binding site" evidence="1">
    <location>
        <position position="122"/>
    </location>
    <ligand>
        <name>ATP</name>
        <dbReference type="ChEBI" id="CHEBI:30616"/>
    </ligand>
</feature>
<feature type="binding site" evidence="1">
    <location>
        <position position="168"/>
    </location>
    <ligand>
        <name>ATP</name>
        <dbReference type="ChEBI" id="CHEBI:30616"/>
    </ligand>
</feature>
<feature type="binding site" evidence="1">
    <location>
        <position position="195"/>
    </location>
    <ligand>
        <name>substrate</name>
    </ligand>
</feature>
<protein>
    <recommendedName>
        <fullName evidence="1">Hydroxyethylthiazole kinase</fullName>
        <ecNumber evidence="1">2.7.1.50</ecNumber>
    </recommendedName>
    <alternativeName>
        <fullName evidence="1">4-methyl-5-beta-hydroxyethylthiazole kinase</fullName>
        <shortName evidence="1">TH kinase</shortName>
        <shortName evidence="1">Thz kinase</shortName>
    </alternativeName>
</protein>
<accession>B9JK65</accession>
<name>THIM_RHIR8</name>
<dbReference type="EC" id="2.7.1.50" evidence="1"/>
<dbReference type="EMBL" id="CP000629">
    <property type="protein sequence ID" value="ACM30307.1"/>
    <property type="molecule type" value="Genomic_DNA"/>
</dbReference>
<dbReference type="RefSeq" id="WP_015917638.1">
    <property type="nucleotide sequence ID" value="NC_011983.1"/>
</dbReference>
<dbReference type="SMR" id="B9JK65"/>
<dbReference type="STRING" id="311403.Arad_9219"/>
<dbReference type="GeneID" id="86852244"/>
<dbReference type="KEGG" id="ara:Arad_9219"/>
<dbReference type="eggNOG" id="COG2145">
    <property type="taxonomic scope" value="Bacteria"/>
</dbReference>
<dbReference type="HOGENOM" id="CLU_019943_0_1_5"/>
<dbReference type="UniPathway" id="UPA00060">
    <property type="reaction ID" value="UER00139"/>
</dbReference>
<dbReference type="Proteomes" id="UP000001600">
    <property type="component" value="Chromosome 2"/>
</dbReference>
<dbReference type="GO" id="GO:0005524">
    <property type="term" value="F:ATP binding"/>
    <property type="evidence" value="ECO:0007669"/>
    <property type="project" value="UniProtKB-UniRule"/>
</dbReference>
<dbReference type="GO" id="GO:0004417">
    <property type="term" value="F:hydroxyethylthiazole kinase activity"/>
    <property type="evidence" value="ECO:0007669"/>
    <property type="project" value="UniProtKB-UniRule"/>
</dbReference>
<dbReference type="GO" id="GO:0000287">
    <property type="term" value="F:magnesium ion binding"/>
    <property type="evidence" value="ECO:0007669"/>
    <property type="project" value="UniProtKB-UniRule"/>
</dbReference>
<dbReference type="GO" id="GO:0009228">
    <property type="term" value="P:thiamine biosynthetic process"/>
    <property type="evidence" value="ECO:0007669"/>
    <property type="project" value="UniProtKB-KW"/>
</dbReference>
<dbReference type="GO" id="GO:0009229">
    <property type="term" value="P:thiamine diphosphate biosynthetic process"/>
    <property type="evidence" value="ECO:0007669"/>
    <property type="project" value="UniProtKB-UniRule"/>
</dbReference>
<dbReference type="CDD" id="cd01170">
    <property type="entry name" value="THZ_kinase"/>
    <property type="match status" value="1"/>
</dbReference>
<dbReference type="Gene3D" id="3.40.1190.20">
    <property type="match status" value="1"/>
</dbReference>
<dbReference type="HAMAP" id="MF_00228">
    <property type="entry name" value="Thz_kinase"/>
    <property type="match status" value="1"/>
</dbReference>
<dbReference type="InterPro" id="IPR000417">
    <property type="entry name" value="Hyethyz_kinase"/>
</dbReference>
<dbReference type="InterPro" id="IPR029056">
    <property type="entry name" value="Ribokinase-like"/>
</dbReference>
<dbReference type="NCBIfam" id="NF006830">
    <property type="entry name" value="PRK09355.1"/>
    <property type="match status" value="1"/>
</dbReference>
<dbReference type="NCBIfam" id="TIGR00694">
    <property type="entry name" value="thiM"/>
    <property type="match status" value="1"/>
</dbReference>
<dbReference type="Pfam" id="PF02110">
    <property type="entry name" value="HK"/>
    <property type="match status" value="1"/>
</dbReference>
<dbReference type="PIRSF" id="PIRSF000513">
    <property type="entry name" value="Thz_kinase"/>
    <property type="match status" value="1"/>
</dbReference>
<dbReference type="PRINTS" id="PR01099">
    <property type="entry name" value="HYETHTZKNASE"/>
</dbReference>
<dbReference type="SUPFAM" id="SSF53613">
    <property type="entry name" value="Ribokinase-like"/>
    <property type="match status" value="1"/>
</dbReference>
<proteinExistence type="inferred from homology"/>